<name>RL23_SHEPA</name>
<proteinExistence type="inferred from homology"/>
<organism>
    <name type="scientific">Shewanella pealeana (strain ATCC 700345 / ANG-SQ1)</name>
    <dbReference type="NCBI Taxonomy" id="398579"/>
    <lineage>
        <taxon>Bacteria</taxon>
        <taxon>Pseudomonadati</taxon>
        <taxon>Pseudomonadota</taxon>
        <taxon>Gammaproteobacteria</taxon>
        <taxon>Alteromonadales</taxon>
        <taxon>Shewanellaceae</taxon>
        <taxon>Shewanella</taxon>
    </lineage>
</organism>
<sequence>MISEERLLKVILAPHISEKSTVNAEKNNTVVFRVAIDATKAEVKAAVAQLFEVEVDSVRTLVNKGKTKRTGARVGRRSDWKKAYVTLAEGADIDFVGGAE</sequence>
<protein>
    <recommendedName>
        <fullName evidence="1">Large ribosomal subunit protein uL23</fullName>
    </recommendedName>
    <alternativeName>
        <fullName evidence="2">50S ribosomal protein L23</fullName>
    </alternativeName>
</protein>
<feature type="chain" id="PRO_1000087230" description="Large ribosomal subunit protein uL23">
    <location>
        <begin position="1"/>
        <end position="100"/>
    </location>
</feature>
<gene>
    <name evidence="1" type="primary">rplW</name>
    <name type="ordered locus">Spea_0186</name>
</gene>
<keyword id="KW-1185">Reference proteome</keyword>
<keyword id="KW-0687">Ribonucleoprotein</keyword>
<keyword id="KW-0689">Ribosomal protein</keyword>
<keyword id="KW-0694">RNA-binding</keyword>
<keyword id="KW-0699">rRNA-binding</keyword>
<comment type="function">
    <text evidence="1">One of the early assembly proteins it binds 23S rRNA. One of the proteins that surrounds the polypeptide exit tunnel on the outside of the ribosome. Forms the main docking site for trigger factor binding to the ribosome.</text>
</comment>
<comment type="subunit">
    <text evidence="1">Part of the 50S ribosomal subunit. Contacts protein L29, and trigger factor when it is bound to the ribosome.</text>
</comment>
<comment type="similarity">
    <text evidence="1">Belongs to the universal ribosomal protein uL23 family.</text>
</comment>
<evidence type="ECO:0000255" key="1">
    <source>
        <dbReference type="HAMAP-Rule" id="MF_01369"/>
    </source>
</evidence>
<evidence type="ECO:0000305" key="2"/>
<reference key="1">
    <citation type="submission" date="2007-10" db="EMBL/GenBank/DDBJ databases">
        <title>Complete sequence of Shewanella pealeana ATCC 700345.</title>
        <authorList>
            <consortium name="US DOE Joint Genome Institute"/>
            <person name="Copeland A."/>
            <person name="Lucas S."/>
            <person name="Lapidus A."/>
            <person name="Barry K."/>
            <person name="Glavina del Rio T."/>
            <person name="Dalin E."/>
            <person name="Tice H."/>
            <person name="Pitluck S."/>
            <person name="Chertkov O."/>
            <person name="Brettin T."/>
            <person name="Bruce D."/>
            <person name="Detter J.C."/>
            <person name="Han C."/>
            <person name="Schmutz J."/>
            <person name="Larimer F."/>
            <person name="Land M."/>
            <person name="Hauser L."/>
            <person name="Kyrpides N."/>
            <person name="Kim E."/>
            <person name="Zhao J.-S.Z."/>
            <person name="Manno D."/>
            <person name="Hawari J."/>
            <person name="Richardson P."/>
        </authorList>
    </citation>
    <scope>NUCLEOTIDE SEQUENCE [LARGE SCALE GENOMIC DNA]</scope>
    <source>
        <strain>ATCC 700345 / ANG-SQ1</strain>
    </source>
</reference>
<accession>A8GYX8</accession>
<dbReference type="EMBL" id="CP000851">
    <property type="protein sequence ID" value="ABV85515.1"/>
    <property type="molecule type" value="Genomic_DNA"/>
</dbReference>
<dbReference type="RefSeq" id="WP_012153459.1">
    <property type="nucleotide sequence ID" value="NC_009901.1"/>
</dbReference>
<dbReference type="SMR" id="A8GYX8"/>
<dbReference type="STRING" id="398579.Spea_0186"/>
<dbReference type="KEGG" id="spl:Spea_0186"/>
<dbReference type="eggNOG" id="COG0089">
    <property type="taxonomic scope" value="Bacteria"/>
</dbReference>
<dbReference type="HOGENOM" id="CLU_037562_3_1_6"/>
<dbReference type="OrthoDB" id="9793353at2"/>
<dbReference type="Proteomes" id="UP000002608">
    <property type="component" value="Chromosome"/>
</dbReference>
<dbReference type="GO" id="GO:1990904">
    <property type="term" value="C:ribonucleoprotein complex"/>
    <property type="evidence" value="ECO:0007669"/>
    <property type="project" value="UniProtKB-KW"/>
</dbReference>
<dbReference type="GO" id="GO:0005840">
    <property type="term" value="C:ribosome"/>
    <property type="evidence" value="ECO:0007669"/>
    <property type="project" value="UniProtKB-KW"/>
</dbReference>
<dbReference type="GO" id="GO:0019843">
    <property type="term" value="F:rRNA binding"/>
    <property type="evidence" value="ECO:0007669"/>
    <property type="project" value="UniProtKB-UniRule"/>
</dbReference>
<dbReference type="GO" id="GO:0003735">
    <property type="term" value="F:structural constituent of ribosome"/>
    <property type="evidence" value="ECO:0007669"/>
    <property type="project" value="InterPro"/>
</dbReference>
<dbReference type="GO" id="GO:0006412">
    <property type="term" value="P:translation"/>
    <property type="evidence" value="ECO:0007669"/>
    <property type="project" value="UniProtKB-UniRule"/>
</dbReference>
<dbReference type="FunFam" id="3.30.70.330:FF:000001">
    <property type="entry name" value="50S ribosomal protein L23"/>
    <property type="match status" value="1"/>
</dbReference>
<dbReference type="Gene3D" id="3.30.70.330">
    <property type="match status" value="1"/>
</dbReference>
<dbReference type="HAMAP" id="MF_01369_B">
    <property type="entry name" value="Ribosomal_uL23_B"/>
    <property type="match status" value="1"/>
</dbReference>
<dbReference type="InterPro" id="IPR012677">
    <property type="entry name" value="Nucleotide-bd_a/b_plait_sf"/>
</dbReference>
<dbReference type="InterPro" id="IPR013025">
    <property type="entry name" value="Ribosomal_uL23-like"/>
</dbReference>
<dbReference type="InterPro" id="IPR012678">
    <property type="entry name" value="Ribosomal_uL23/eL15/eS24_sf"/>
</dbReference>
<dbReference type="InterPro" id="IPR001014">
    <property type="entry name" value="Ribosomal_uL23_CS"/>
</dbReference>
<dbReference type="NCBIfam" id="NF004358">
    <property type="entry name" value="PRK05738.1-1"/>
    <property type="match status" value="1"/>
</dbReference>
<dbReference type="NCBIfam" id="NF004359">
    <property type="entry name" value="PRK05738.1-3"/>
    <property type="match status" value="1"/>
</dbReference>
<dbReference type="NCBIfam" id="NF004363">
    <property type="entry name" value="PRK05738.2-4"/>
    <property type="match status" value="1"/>
</dbReference>
<dbReference type="PANTHER" id="PTHR11620">
    <property type="entry name" value="60S RIBOSOMAL PROTEIN L23A"/>
    <property type="match status" value="1"/>
</dbReference>
<dbReference type="Pfam" id="PF00276">
    <property type="entry name" value="Ribosomal_L23"/>
    <property type="match status" value="1"/>
</dbReference>
<dbReference type="SUPFAM" id="SSF54189">
    <property type="entry name" value="Ribosomal proteins S24e, L23 and L15e"/>
    <property type="match status" value="1"/>
</dbReference>
<dbReference type="PROSITE" id="PS00050">
    <property type="entry name" value="RIBOSOMAL_L23"/>
    <property type="match status" value="1"/>
</dbReference>